<keyword id="KW-0004">4Fe-4S</keyword>
<keyword id="KW-0249">Electron transport</keyword>
<keyword id="KW-0408">Iron</keyword>
<keyword id="KW-0411">Iron-sulfur</keyword>
<keyword id="KW-0479">Metal-binding</keyword>
<keyword id="KW-0500">Molybdenum</keyword>
<keyword id="KW-0534">Nitrate assimilation</keyword>
<keyword id="KW-0560">Oxidoreductase</keyword>
<keyword id="KW-0574">Periplasm</keyword>
<keyword id="KW-1185">Reference proteome</keyword>
<keyword id="KW-0732">Signal</keyword>
<keyword id="KW-0813">Transport</keyword>
<sequence>MKLSRRSFMKANAVAAAAAAAGLSVPGVARAVVGQQEAIKWDKAPCRFCGTGCGVLVGTQQGRVVACQGDPDAPVNRGLNCIKGYFLPKIMYGKDRLTQPLLRMKNGKYDKEGEFTPITWDQAFDVMEEKFKTALKEKGPESIGMFGSGQWTIWEGYAASKLFKAGFRSNNIDPNARHCMASAVVGFMRTFGMDEPMGCYDDIEQADAFVLWGANMAEMHPILWSRITNRRLSNQNVTVAVLSTYQHRSFELADNGIIFTPQSDLVILNYIANYIIQNNAINQDFFSKHVNLRKGATDIGYGLRPTHPLEKAAKNPGSDASEPMSFEDYKAFVAEYTLEKTAEMTGVPKDQLEQLAQLYADPNKKVISYWTMGFNQHTRGVWANNLVYNLHLLTGKISQPGCGPFSLTGQPSACGTAREVGTFAHRLPADMVVTNEKHRDICEKKWNIPGGTIPAKIGLHAVAQDRALKDGKLNVYWTMCTNNMQAGPNINEERMPGWRDPRNFIIVSDPYPTVSALAADLILPTAMWVEKEGAYGNAERRTQFWRQQVQAPGEAKSDLWQLVQFSRRFKTEEVWPEELLAKKPELRGKTLYEVLYATPEVSKFPVSELAEDQLNDESRELGFYLQKGLFEEYAWFGRGHGHDLAPFDDYHKARGLRWPVVNGKETQWRYSEGNDPYVKAGEGYKFYGKPDGKAVIFALPFEPAAEAPDEEYDLWLSTGRVLEHWHTGSMTRRVPELHRAFPEAVLFIHPLDAKARDLRRGDKVKVVSRRGEVISIVETRGRNRPPQGLVYMPFFDAAQLVNKLTLDATDPLSKETDFKKCAVKLEKV</sequence>
<proteinExistence type="inferred from homology"/>
<protein>
    <recommendedName>
        <fullName evidence="1">Periplasmic nitrate reductase</fullName>
        <ecNumber evidence="1">1.9.6.1</ecNumber>
    </recommendedName>
</protein>
<organism>
    <name type="scientific">Escherichia coli (strain 55989 / EAEC)</name>
    <dbReference type="NCBI Taxonomy" id="585055"/>
    <lineage>
        <taxon>Bacteria</taxon>
        <taxon>Pseudomonadati</taxon>
        <taxon>Pseudomonadota</taxon>
        <taxon>Gammaproteobacteria</taxon>
        <taxon>Enterobacterales</taxon>
        <taxon>Enterobacteriaceae</taxon>
        <taxon>Escherichia</taxon>
    </lineage>
</organism>
<comment type="function">
    <text evidence="1">Catalytic subunit of the periplasmic nitrate reductase complex NapAB. Receives electrons from NapB and catalyzes the reduction of nitrate to nitrite.</text>
</comment>
<comment type="catalytic activity">
    <reaction evidence="1">
        <text>2 Fe(II)-[cytochrome] + nitrate + 2 H(+) = 2 Fe(III)-[cytochrome] + nitrite + H2O</text>
        <dbReference type="Rhea" id="RHEA:12909"/>
        <dbReference type="Rhea" id="RHEA-COMP:11777"/>
        <dbReference type="Rhea" id="RHEA-COMP:11778"/>
        <dbReference type="ChEBI" id="CHEBI:15377"/>
        <dbReference type="ChEBI" id="CHEBI:15378"/>
        <dbReference type="ChEBI" id="CHEBI:16301"/>
        <dbReference type="ChEBI" id="CHEBI:17632"/>
        <dbReference type="ChEBI" id="CHEBI:29033"/>
        <dbReference type="ChEBI" id="CHEBI:29034"/>
        <dbReference type="EC" id="1.9.6.1"/>
    </reaction>
</comment>
<comment type="cofactor">
    <cofactor evidence="1">
        <name>[4Fe-4S] cluster</name>
        <dbReference type="ChEBI" id="CHEBI:49883"/>
    </cofactor>
    <text evidence="1">Binds 1 [4Fe-4S] cluster.</text>
</comment>
<comment type="cofactor">
    <cofactor evidence="1">
        <name>Mo-bis(molybdopterin guanine dinucleotide)</name>
        <dbReference type="ChEBI" id="CHEBI:60539"/>
    </cofactor>
    <text evidence="1">Binds 1 molybdenum-bis(molybdopterin guanine dinucleotide) (Mo-bis-MGD) cofactor per subunit.</text>
</comment>
<comment type="subunit">
    <text evidence="1">Component of the periplasmic nitrate reductase NapAB complex composed of NapA and NapB.</text>
</comment>
<comment type="subcellular location">
    <subcellularLocation>
        <location evidence="1">Periplasm</location>
    </subcellularLocation>
</comment>
<comment type="PTM">
    <text evidence="1">Predicted to be exported by the Tat system. The position of the signal peptide cleavage has not been experimentally proven.</text>
</comment>
<comment type="similarity">
    <text evidence="1">Belongs to the prokaryotic molybdopterin-containing oxidoreductase family. NasA/NapA/NarB subfamily.</text>
</comment>
<gene>
    <name evidence="1" type="primary">napA</name>
    <name type="ordered locus">EC55989_2460</name>
</gene>
<accession>B7LAM9</accession>
<reference key="1">
    <citation type="journal article" date="2009" name="PLoS Genet.">
        <title>Organised genome dynamics in the Escherichia coli species results in highly diverse adaptive paths.</title>
        <authorList>
            <person name="Touchon M."/>
            <person name="Hoede C."/>
            <person name="Tenaillon O."/>
            <person name="Barbe V."/>
            <person name="Baeriswyl S."/>
            <person name="Bidet P."/>
            <person name="Bingen E."/>
            <person name="Bonacorsi S."/>
            <person name="Bouchier C."/>
            <person name="Bouvet O."/>
            <person name="Calteau A."/>
            <person name="Chiapello H."/>
            <person name="Clermont O."/>
            <person name="Cruveiller S."/>
            <person name="Danchin A."/>
            <person name="Diard M."/>
            <person name="Dossat C."/>
            <person name="Karoui M.E."/>
            <person name="Frapy E."/>
            <person name="Garry L."/>
            <person name="Ghigo J.M."/>
            <person name="Gilles A.M."/>
            <person name="Johnson J."/>
            <person name="Le Bouguenec C."/>
            <person name="Lescat M."/>
            <person name="Mangenot S."/>
            <person name="Martinez-Jehanne V."/>
            <person name="Matic I."/>
            <person name="Nassif X."/>
            <person name="Oztas S."/>
            <person name="Petit M.A."/>
            <person name="Pichon C."/>
            <person name="Rouy Z."/>
            <person name="Ruf C.S."/>
            <person name="Schneider D."/>
            <person name="Tourret J."/>
            <person name="Vacherie B."/>
            <person name="Vallenet D."/>
            <person name="Medigue C."/>
            <person name="Rocha E.P.C."/>
            <person name="Denamur E."/>
        </authorList>
    </citation>
    <scope>NUCLEOTIDE SEQUENCE [LARGE SCALE GENOMIC DNA]</scope>
    <source>
        <strain>55989 / EAEC</strain>
    </source>
</reference>
<dbReference type="EC" id="1.9.6.1" evidence="1"/>
<dbReference type="EMBL" id="CU928145">
    <property type="protein sequence ID" value="CAU98329.1"/>
    <property type="molecule type" value="Genomic_DNA"/>
</dbReference>
<dbReference type="RefSeq" id="WP_000778057.1">
    <property type="nucleotide sequence ID" value="NC_011748.1"/>
</dbReference>
<dbReference type="SMR" id="B7LAM9"/>
<dbReference type="GeneID" id="75206458"/>
<dbReference type="KEGG" id="eck:EC55989_2460"/>
<dbReference type="HOGENOM" id="CLU_000422_13_4_6"/>
<dbReference type="Proteomes" id="UP000000746">
    <property type="component" value="Chromosome"/>
</dbReference>
<dbReference type="GO" id="GO:0016020">
    <property type="term" value="C:membrane"/>
    <property type="evidence" value="ECO:0007669"/>
    <property type="project" value="TreeGrafter"/>
</dbReference>
<dbReference type="GO" id="GO:0009325">
    <property type="term" value="C:nitrate reductase complex"/>
    <property type="evidence" value="ECO:0007669"/>
    <property type="project" value="TreeGrafter"/>
</dbReference>
<dbReference type="GO" id="GO:0042597">
    <property type="term" value="C:periplasmic space"/>
    <property type="evidence" value="ECO:0007669"/>
    <property type="project" value="UniProtKB-SubCell"/>
</dbReference>
<dbReference type="GO" id="GO:0051539">
    <property type="term" value="F:4 iron, 4 sulfur cluster binding"/>
    <property type="evidence" value="ECO:0007669"/>
    <property type="project" value="UniProtKB-KW"/>
</dbReference>
<dbReference type="GO" id="GO:0009055">
    <property type="term" value="F:electron transfer activity"/>
    <property type="evidence" value="ECO:0007669"/>
    <property type="project" value="UniProtKB-UniRule"/>
</dbReference>
<dbReference type="GO" id="GO:0005506">
    <property type="term" value="F:iron ion binding"/>
    <property type="evidence" value="ECO:0007669"/>
    <property type="project" value="UniProtKB-UniRule"/>
</dbReference>
<dbReference type="GO" id="GO:0030151">
    <property type="term" value="F:molybdenum ion binding"/>
    <property type="evidence" value="ECO:0007669"/>
    <property type="project" value="InterPro"/>
</dbReference>
<dbReference type="GO" id="GO:0043546">
    <property type="term" value="F:molybdopterin cofactor binding"/>
    <property type="evidence" value="ECO:0007669"/>
    <property type="project" value="InterPro"/>
</dbReference>
<dbReference type="GO" id="GO:0050140">
    <property type="term" value="F:nitrate reductase (cytochrome) activity"/>
    <property type="evidence" value="ECO:0007669"/>
    <property type="project" value="UniProtKB-EC"/>
</dbReference>
<dbReference type="GO" id="GO:0045333">
    <property type="term" value="P:cellular respiration"/>
    <property type="evidence" value="ECO:0007669"/>
    <property type="project" value="UniProtKB-ARBA"/>
</dbReference>
<dbReference type="GO" id="GO:0006777">
    <property type="term" value="P:Mo-molybdopterin cofactor biosynthetic process"/>
    <property type="evidence" value="ECO:0007669"/>
    <property type="project" value="UniProtKB-UniRule"/>
</dbReference>
<dbReference type="GO" id="GO:0042128">
    <property type="term" value="P:nitrate assimilation"/>
    <property type="evidence" value="ECO:0007669"/>
    <property type="project" value="UniProtKB-UniRule"/>
</dbReference>
<dbReference type="CDD" id="cd02791">
    <property type="entry name" value="MopB_CT_Nitrate-R-NapA-like"/>
    <property type="match status" value="1"/>
</dbReference>
<dbReference type="CDD" id="cd02754">
    <property type="entry name" value="MopB_Nitrate-R-NapA-like"/>
    <property type="match status" value="1"/>
</dbReference>
<dbReference type="FunFam" id="2.40.40.20:FF:000005">
    <property type="entry name" value="Periplasmic nitrate reductase"/>
    <property type="match status" value="1"/>
</dbReference>
<dbReference type="FunFam" id="3.40.228.10:FF:000001">
    <property type="entry name" value="Periplasmic nitrate reductase"/>
    <property type="match status" value="1"/>
</dbReference>
<dbReference type="Gene3D" id="2.40.40.20">
    <property type="match status" value="1"/>
</dbReference>
<dbReference type="Gene3D" id="3.30.200.210">
    <property type="match status" value="1"/>
</dbReference>
<dbReference type="Gene3D" id="3.40.50.740">
    <property type="match status" value="1"/>
</dbReference>
<dbReference type="Gene3D" id="3.40.228.10">
    <property type="entry name" value="Dimethylsulfoxide Reductase, domain 2"/>
    <property type="match status" value="1"/>
</dbReference>
<dbReference type="HAMAP" id="MF_01630">
    <property type="entry name" value="Nitrate_reduct_NapA"/>
    <property type="match status" value="1"/>
</dbReference>
<dbReference type="InterPro" id="IPR009010">
    <property type="entry name" value="Asp_de-COase-like_dom_sf"/>
</dbReference>
<dbReference type="InterPro" id="IPR041957">
    <property type="entry name" value="CT_Nitrate-R-NapA-like"/>
</dbReference>
<dbReference type="InterPro" id="IPR006657">
    <property type="entry name" value="MoPterin_dinucl-bd_dom"/>
</dbReference>
<dbReference type="InterPro" id="IPR006656">
    <property type="entry name" value="Mopterin_OxRdtase"/>
</dbReference>
<dbReference type="InterPro" id="IPR006963">
    <property type="entry name" value="Mopterin_OxRdtase_4Fe-4S_dom"/>
</dbReference>
<dbReference type="InterPro" id="IPR027467">
    <property type="entry name" value="MopterinOxRdtase_cofactor_BS"/>
</dbReference>
<dbReference type="InterPro" id="IPR010051">
    <property type="entry name" value="Periplasm_NO3_reductase_lsu"/>
</dbReference>
<dbReference type="InterPro" id="IPR050123">
    <property type="entry name" value="Prok_molybdopt-oxidoreductase"/>
</dbReference>
<dbReference type="InterPro" id="IPR006311">
    <property type="entry name" value="TAT_signal"/>
</dbReference>
<dbReference type="InterPro" id="IPR019546">
    <property type="entry name" value="TAT_signal_bac_arc"/>
</dbReference>
<dbReference type="NCBIfam" id="TIGR01706">
    <property type="entry name" value="NAPA"/>
    <property type="match status" value="1"/>
</dbReference>
<dbReference type="NCBIfam" id="NF010055">
    <property type="entry name" value="PRK13532.1"/>
    <property type="match status" value="1"/>
</dbReference>
<dbReference type="NCBIfam" id="TIGR01409">
    <property type="entry name" value="TAT_signal_seq"/>
    <property type="match status" value="1"/>
</dbReference>
<dbReference type="PANTHER" id="PTHR43105:SF11">
    <property type="entry name" value="PERIPLASMIC NITRATE REDUCTASE"/>
    <property type="match status" value="1"/>
</dbReference>
<dbReference type="PANTHER" id="PTHR43105">
    <property type="entry name" value="RESPIRATORY NITRATE REDUCTASE"/>
    <property type="match status" value="1"/>
</dbReference>
<dbReference type="Pfam" id="PF04879">
    <property type="entry name" value="Molybdop_Fe4S4"/>
    <property type="match status" value="1"/>
</dbReference>
<dbReference type="Pfam" id="PF00384">
    <property type="entry name" value="Molybdopterin"/>
    <property type="match status" value="1"/>
</dbReference>
<dbReference type="Pfam" id="PF01568">
    <property type="entry name" value="Molydop_binding"/>
    <property type="match status" value="1"/>
</dbReference>
<dbReference type="SMART" id="SM00926">
    <property type="entry name" value="Molybdop_Fe4S4"/>
    <property type="match status" value="1"/>
</dbReference>
<dbReference type="SUPFAM" id="SSF50692">
    <property type="entry name" value="ADC-like"/>
    <property type="match status" value="1"/>
</dbReference>
<dbReference type="SUPFAM" id="SSF53706">
    <property type="entry name" value="Formate dehydrogenase/DMSO reductase, domains 1-3"/>
    <property type="match status" value="1"/>
</dbReference>
<dbReference type="PROSITE" id="PS51669">
    <property type="entry name" value="4FE4S_MOW_BIS_MGD"/>
    <property type="match status" value="1"/>
</dbReference>
<dbReference type="PROSITE" id="PS00551">
    <property type="entry name" value="MOLYBDOPTERIN_PROK_1"/>
    <property type="match status" value="1"/>
</dbReference>
<dbReference type="PROSITE" id="PS51318">
    <property type="entry name" value="TAT"/>
    <property type="match status" value="1"/>
</dbReference>
<name>NAPA_ECO55</name>
<feature type="signal peptide" description="Tat-type signal" evidence="1">
    <location>
        <begin position="1"/>
        <end position="31"/>
    </location>
</feature>
<feature type="chain" id="PRO_1000186355" description="Periplasmic nitrate reductase" evidence="1">
    <location>
        <begin position="32"/>
        <end position="828"/>
    </location>
</feature>
<feature type="domain" description="4Fe-4S Mo/W bis-MGD-type" evidence="1">
    <location>
        <begin position="39"/>
        <end position="95"/>
    </location>
</feature>
<feature type="binding site" evidence="1">
    <location>
        <position position="46"/>
    </location>
    <ligand>
        <name>[4Fe-4S] cluster</name>
        <dbReference type="ChEBI" id="CHEBI:49883"/>
    </ligand>
</feature>
<feature type="binding site" evidence="1">
    <location>
        <position position="49"/>
    </location>
    <ligand>
        <name>[4Fe-4S] cluster</name>
        <dbReference type="ChEBI" id="CHEBI:49883"/>
    </ligand>
</feature>
<feature type="binding site" evidence="1">
    <location>
        <position position="53"/>
    </location>
    <ligand>
        <name>[4Fe-4S] cluster</name>
        <dbReference type="ChEBI" id="CHEBI:49883"/>
    </ligand>
</feature>
<feature type="binding site" evidence="1">
    <location>
        <position position="81"/>
    </location>
    <ligand>
        <name>[4Fe-4S] cluster</name>
        <dbReference type="ChEBI" id="CHEBI:49883"/>
    </ligand>
</feature>
<feature type="binding site" evidence="1">
    <location>
        <position position="83"/>
    </location>
    <ligand>
        <name>Mo-bis(molybdopterin guanine dinucleotide)</name>
        <dbReference type="ChEBI" id="CHEBI:60539"/>
    </ligand>
</feature>
<feature type="binding site" evidence="1">
    <location>
        <position position="150"/>
    </location>
    <ligand>
        <name>Mo-bis(molybdopterin guanine dinucleotide)</name>
        <dbReference type="ChEBI" id="CHEBI:60539"/>
    </ligand>
</feature>
<feature type="binding site" evidence="1">
    <location>
        <position position="175"/>
    </location>
    <ligand>
        <name>Mo-bis(molybdopterin guanine dinucleotide)</name>
        <dbReference type="ChEBI" id="CHEBI:60539"/>
    </ligand>
</feature>
<feature type="binding site" evidence="1">
    <location>
        <position position="179"/>
    </location>
    <ligand>
        <name>Mo-bis(molybdopterin guanine dinucleotide)</name>
        <dbReference type="ChEBI" id="CHEBI:60539"/>
    </ligand>
</feature>
<feature type="binding site" evidence="1">
    <location>
        <begin position="212"/>
        <end position="219"/>
    </location>
    <ligand>
        <name>Mo-bis(molybdopterin guanine dinucleotide)</name>
        <dbReference type="ChEBI" id="CHEBI:60539"/>
    </ligand>
</feature>
<feature type="binding site" evidence="1">
    <location>
        <begin position="243"/>
        <end position="247"/>
    </location>
    <ligand>
        <name>Mo-bis(molybdopterin guanine dinucleotide)</name>
        <dbReference type="ChEBI" id="CHEBI:60539"/>
    </ligand>
</feature>
<feature type="binding site" evidence="1">
    <location>
        <begin position="262"/>
        <end position="264"/>
    </location>
    <ligand>
        <name>Mo-bis(molybdopterin guanine dinucleotide)</name>
        <dbReference type="ChEBI" id="CHEBI:60539"/>
    </ligand>
</feature>
<feature type="binding site" evidence="1">
    <location>
        <position position="372"/>
    </location>
    <ligand>
        <name>Mo-bis(molybdopterin guanine dinucleotide)</name>
        <dbReference type="ChEBI" id="CHEBI:60539"/>
    </ligand>
</feature>
<feature type="binding site" evidence="1">
    <location>
        <position position="376"/>
    </location>
    <ligand>
        <name>Mo-bis(molybdopterin guanine dinucleotide)</name>
        <dbReference type="ChEBI" id="CHEBI:60539"/>
    </ligand>
</feature>
<feature type="binding site" evidence="1">
    <location>
        <position position="482"/>
    </location>
    <ligand>
        <name>Mo-bis(molybdopterin guanine dinucleotide)</name>
        <dbReference type="ChEBI" id="CHEBI:60539"/>
    </ligand>
</feature>
<feature type="binding site" evidence="1">
    <location>
        <begin position="508"/>
        <end position="509"/>
    </location>
    <ligand>
        <name>Mo-bis(molybdopterin guanine dinucleotide)</name>
        <dbReference type="ChEBI" id="CHEBI:60539"/>
    </ligand>
</feature>
<feature type="binding site" evidence="1">
    <location>
        <position position="531"/>
    </location>
    <ligand>
        <name>Mo-bis(molybdopterin guanine dinucleotide)</name>
        <dbReference type="ChEBI" id="CHEBI:60539"/>
    </ligand>
</feature>
<feature type="binding site" evidence="1">
    <location>
        <position position="558"/>
    </location>
    <ligand>
        <name>Mo-bis(molybdopterin guanine dinucleotide)</name>
        <dbReference type="ChEBI" id="CHEBI:60539"/>
    </ligand>
</feature>
<feature type="binding site" evidence="1">
    <location>
        <begin position="718"/>
        <end position="727"/>
    </location>
    <ligand>
        <name>Mo-bis(molybdopterin guanine dinucleotide)</name>
        <dbReference type="ChEBI" id="CHEBI:60539"/>
    </ligand>
</feature>
<feature type="binding site" evidence="1">
    <location>
        <position position="794"/>
    </location>
    <ligand>
        <name>substrate</name>
    </ligand>
</feature>
<feature type="binding site" evidence="1">
    <location>
        <position position="802"/>
    </location>
    <ligand>
        <name>Mo-bis(molybdopterin guanine dinucleotide)</name>
        <dbReference type="ChEBI" id="CHEBI:60539"/>
    </ligand>
</feature>
<feature type="binding site" evidence="1">
    <location>
        <position position="819"/>
    </location>
    <ligand>
        <name>Mo-bis(molybdopterin guanine dinucleotide)</name>
        <dbReference type="ChEBI" id="CHEBI:60539"/>
    </ligand>
</feature>
<evidence type="ECO:0000255" key="1">
    <source>
        <dbReference type="HAMAP-Rule" id="MF_01630"/>
    </source>
</evidence>